<organism>
    <name type="scientific">Saccharomyces cerevisiae (strain ATCC 204508 / S288c)</name>
    <name type="common">Baker's yeast</name>
    <dbReference type="NCBI Taxonomy" id="559292"/>
    <lineage>
        <taxon>Eukaryota</taxon>
        <taxon>Fungi</taxon>
        <taxon>Dikarya</taxon>
        <taxon>Ascomycota</taxon>
        <taxon>Saccharomycotina</taxon>
        <taxon>Saccharomycetes</taxon>
        <taxon>Saccharomycetales</taxon>
        <taxon>Saccharomycetaceae</taxon>
        <taxon>Saccharomyces</taxon>
    </lineage>
</organism>
<dbReference type="EC" id="3.2.1.58"/>
<dbReference type="EMBL" id="M34341">
    <property type="protein sequence ID" value="AAA34599.1"/>
    <property type="molecule type" value="Genomic_DNA"/>
</dbReference>
<dbReference type="EMBL" id="U17243">
    <property type="protein sequence ID" value="AAB67345.1"/>
    <property type="molecule type" value="Genomic_DNA"/>
</dbReference>
<dbReference type="EMBL" id="AY693069">
    <property type="protein sequence ID" value="AAT93088.1"/>
    <property type="molecule type" value="Genomic_DNA"/>
</dbReference>
<dbReference type="EMBL" id="BK006945">
    <property type="protein sequence ID" value="DAA09610.1"/>
    <property type="molecule type" value="Genomic_DNA"/>
</dbReference>
<dbReference type="PIR" id="JN0118">
    <property type="entry name" value="JN0118"/>
</dbReference>
<dbReference type="RefSeq" id="NP_013403.1">
    <property type="nucleotide sequence ID" value="NM_001182188.1"/>
</dbReference>
<dbReference type="PDB" id="1H4P">
    <property type="method" value="X-ray"/>
    <property type="resolution" value="1.75 A"/>
    <property type="chains" value="A/B=41-448"/>
</dbReference>
<dbReference type="PDBsum" id="1H4P"/>
<dbReference type="SMR" id="P23776"/>
<dbReference type="BioGRID" id="31564">
    <property type="interactions" value="119"/>
</dbReference>
<dbReference type="DIP" id="DIP-6384N"/>
<dbReference type="FunCoup" id="P23776">
    <property type="interactions" value="220"/>
</dbReference>
<dbReference type="IntAct" id="P23776">
    <property type="interactions" value="4"/>
</dbReference>
<dbReference type="STRING" id="4932.YLR300W"/>
<dbReference type="CAZy" id="GH5">
    <property type="family name" value="Glycoside Hydrolase Family 5"/>
</dbReference>
<dbReference type="GlyCosmos" id="P23776">
    <property type="glycosylation" value="2 sites, No reported glycans"/>
</dbReference>
<dbReference type="GlyGen" id="P23776">
    <property type="glycosylation" value="2 sites"/>
</dbReference>
<dbReference type="iPTMnet" id="P23776"/>
<dbReference type="PaxDb" id="4932-YLR300W"/>
<dbReference type="PeptideAtlas" id="P23776"/>
<dbReference type="EnsemblFungi" id="YLR300W_mRNA">
    <property type="protein sequence ID" value="YLR300W"/>
    <property type="gene ID" value="YLR300W"/>
</dbReference>
<dbReference type="GeneID" id="851007"/>
<dbReference type="KEGG" id="sce:YLR300W"/>
<dbReference type="AGR" id="SGD:S000004291"/>
<dbReference type="SGD" id="S000004291">
    <property type="gene designation" value="EXG1"/>
</dbReference>
<dbReference type="VEuPathDB" id="FungiDB:YLR300W"/>
<dbReference type="eggNOG" id="ENOG502QPYU">
    <property type="taxonomic scope" value="Eukaryota"/>
</dbReference>
<dbReference type="GeneTree" id="ENSGT00940000176313"/>
<dbReference type="HOGENOM" id="CLU_004624_0_1_1"/>
<dbReference type="InParanoid" id="P23776"/>
<dbReference type="OMA" id="MDYHEYQ"/>
<dbReference type="OrthoDB" id="62120at2759"/>
<dbReference type="BioCyc" id="YEAST:YLR300W-MONOMER"/>
<dbReference type="BioGRID-ORCS" id="851007">
    <property type="hits" value="9 hits in 10 CRISPR screens"/>
</dbReference>
<dbReference type="EvolutionaryTrace" id="P23776"/>
<dbReference type="PRO" id="PR:P23776"/>
<dbReference type="Proteomes" id="UP000002311">
    <property type="component" value="Chromosome XII"/>
</dbReference>
<dbReference type="RNAct" id="P23776">
    <property type="molecule type" value="protein"/>
</dbReference>
<dbReference type="GO" id="GO:0005576">
    <property type="term" value="C:extracellular region"/>
    <property type="evidence" value="ECO:0000314"/>
    <property type="project" value="SGD"/>
</dbReference>
<dbReference type="GO" id="GO:0009277">
    <property type="term" value="C:fungal-type cell wall"/>
    <property type="evidence" value="ECO:0000314"/>
    <property type="project" value="SGD"/>
</dbReference>
<dbReference type="GO" id="GO:0000324">
    <property type="term" value="C:fungal-type vacuole"/>
    <property type="evidence" value="ECO:0007005"/>
    <property type="project" value="SGD"/>
</dbReference>
<dbReference type="GO" id="GO:0004338">
    <property type="term" value="F:glucan exo-1,3-beta-glucosidase activity"/>
    <property type="evidence" value="ECO:0000250"/>
    <property type="project" value="SGD"/>
</dbReference>
<dbReference type="GO" id="GO:0031505">
    <property type="term" value="P:fungal-type cell wall organization"/>
    <property type="evidence" value="ECO:0000250"/>
    <property type="project" value="SGD"/>
</dbReference>
<dbReference type="GO" id="GO:0009251">
    <property type="term" value="P:glucan catabolic process"/>
    <property type="evidence" value="ECO:0000318"/>
    <property type="project" value="GO_Central"/>
</dbReference>
<dbReference type="GO" id="GO:0044042">
    <property type="term" value="P:glucan metabolic process"/>
    <property type="evidence" value="ECO:0000315"/>
    <property type="project" value="SGD"/>
</dbReference>
<dbReference type="FunFam" id="3.20.20.80:FF:000033">
    <property type="entry name" value="Glucan 1,3-beta-glucosidase A"/>
    <property type="match status" value="1"/>
</dbReference>
<dbReference type="Gene3D" id="3.20.20.80">
    <property type="entry name" value="Glycosidases"/>
    <property type="match status" value="1"/>
</dbReference>
<dbReference type="InterPro" id="IPR001547">
    <property type="entry name" value="Glyco_hydro_5"/>
</dbReference>
<dbReference type="InterPro" id="IPR018087">
    <property type="entry name" value="Glyco_hydro_5_CS"/>
</dbReference>
<dbReference type="InterPro" id="IPR017853">
    <property type="entry name" value="Glycoside_hydrolase_SF"/>
</dbReference>
<dbReference type="InterPro" id="IPR050386">
    <property type="entry name" value="Glycosyl_hydrolase_5"/>
</dbReference>
<dbReference type="PANTHER" id="PTHR31297:SF1">
    <property type="entry name" value="GLUCAN 1,3-BETA-GLUCOSIDASE I_II-RELATED"/>
    <property type="match status" value="1"/>
</dbReference>
<dbReference type="PANTHER" id="PTHR31297">
    <property type="entry name" value="GLUCAN ENDO-1,6-BETA-GLUCOSIDASE B"/>
    <property type="match status" value="1"/>
</dbReference>
<dbReference type="Pfam" id="PF00150">
    <property type="entry name" value="Cellulase"/>
    <property type="match status" value="1"/>
</dbReference>
<dbReference type="SUPFAM" id="SSF51445">
    <property type="entry name" value="(Trans)glycosidases"/>
    <property type="match status" value="1"/>
</dbReference>
<dbReference type="PROSITE" id="PS00659">
    <property type="entry name" value="GLYCOSYL_HYDROL_F5"/>
    <property type="match status" value="1"/>
</dbReference>
<sequence>MLSLKTLLCTLLTVSSVLATPVPARDPSSIQFVHEENKKRYYDYDHGSLGEPIRGVNIGGWLLLEPYITPSLFEAFRTNDDNDEGIPVDEYHFCQYLGKDLAKSRLQSHWSTFYQEQDFANIASQGFNLVRIPIGYWAFQTLDDDPYVSGLQESYLDQAIGWARNNSLKVWVDLHGAAGSQNGFDNSGLRDSYKFLEDSNLAVTTNVLNYILKKYSAEEYLDTVIGIELINEPLGPVLDMDKMKNDYLAPAYEYLRNNIKSDQVIIIHDAFQPYNYWDDFMTENDGYWGVTIDHHHYQVFASDQLERSIDEHIKVACEWGTGVLNESHWTVCGEFAAALTDCTKWLNSVGFGARYDGSWVNGDQTSSYIGSCANNDDIAYWSDERKENTRRYVEAQLDAFEMRGGWIIWCYKTESSLEWDAQRLMFNGLFPQPLTDRKYPNQCGTISN</sequence>
<protein>
    <recommendedName>
        <fullName>Glucan 1,3-beta-glucosidase I/II</fullName>
        <ecNumber>3.2.1.58</ecNumber>
    </recommendedName>
    <alternativeName>
        <fullName>Exo-1,3-beta-glucanase I/II</fullName>
    </alternativeName>
    <alternativeName>
        <fullName>Soluble cell wall protein 6</fullName>
    </alternativeName>
</protein>
<gene>
    <name type="primary">EXG1</name>
    <name type="synonym">BGL1</name>
    <name type="synonym">SCW6</name>
    <name type="ordered locus">YLR300W</name>
    <name type="ORF">L8003.3</name>
</gene>
<feature type="signal peptide" evidence="2">
    <location>
        <begin position="1"/>
        <end position="19"/>
    </location>
</feature>
<feature type="propeptide" id="PRO_0000007892" evidence="5 6 7 8">
    <location>
        <begin position="20"/>
        <end position="40"/>
    </location>
</feature>
<feature type="chain" id="PRO_0000007893" description="Glucan 1,3-beta-glucosidase I/II">
    <location>
        <begin position="41"/>
        <end position="448"/>
    </location>
</feature>
<feature type="active site" description="Proton donor" evidence="1">
    <location>
        <position position="232"/>
    </location>
</feature>
<feature type="active site" description="Nucleophile" evidence="1">
    <location>
        <position position="334"/>
    </location>
</feature>
<feature type="glycosylation site" description="N-linked (GlcNAc...) asparagine" evidence="4">
    <location>
        <position position="165"/>
    </location>
</feature>
<feature type="glycosylation site" description="N-linked (GlcNAc...) asparagine" evidence="4">
    <location>
        <position position="325"/>
    </location>
</feature>
<feature type="sequence conflict" description="In Ref. 7; AA sequence." evidence="9" ref="7">
    <original>Y</original>
    <variation>Q</variation>
    <location>
        <position position="41"/>
    </location>
</feature>
<feature type="sequence conflict" description="In Ref. 7; AA sequence." evidence="9" ref="7">
    <original>H</original>
    <variation>G</variation>
    <location>
        <position position="46"/>
    </location>
</feature>
<feature type="sequence conflict" description="In Ref. 5; AA sequence." evidence="9" ref="5">
    <original>R</original>
    <variation>H</variation>
    <location>
        <position position="77"/>
    </location>
</feature>
<feature type="strand" evidence="10">
    <location>
        <begin position="53"/>
        <end position="57"/>
    </location>
</feature>
<feature type="strand" evidence="10">
    <location>
        <begin position="61"/>
        <end position="63"/>
    </location>
</feature>
<feature type="turn" evidence="10">
    <location>
        <begin position="66"/>
        <end position="68"/>
    </location>
</feature>
<feature type="helix" evidence="10">
    <location>
        <begin position="70"/>
        <end position="74"/>
    </location>
</feature>
<feature type="helix" evidence="10">
    <location>
        <begin position="90"/>
        <end position="97"/>
    </location>
</feature>
<feature type="helix" evidence="10">
    <location>
        <begin position="99"/>
        <end position="113"/>
    </location>
</feature>
<feature type="helix" evidence="10">
    <location>
        <begin position="116"/>
        <end position="124"/>
    </location>
</feature>
<feature type="strand" evidence="10">
    <location>
        <begin position="129"/>
        <end position="135"/>
    </location>
</feature>
<feature type="helix" evidence="10">
    <location>
        <begin position="136"/>
        <end position="138"/>
    </location>
</feature>
<feature type="helix" evidence="10">
    <location>
        <begin position="152"/>
        <end position="165"/>
    </location>
</feature>
<feature type="strand" evidence="10">
    <location>
        <begin position="169"/>
        <end position="176"/>
    </location>
</feature>
<feature type="helix" evidence="10">
    <location>
        <begin position="185"/>
        <end position="187"/>
    </location>
</feature>
<feature type="helix" evidence="10">
    <location>
        <begin position="198"/>
        <end position="214"/>
    </location>
</feature>
<feature type="helix" evidence="10">
    <location>
        <begin position="218"/>
        <end position="221"/>
    </location>
</feature>
<feature type="strand" evidence="10">
    <location>
        <begin position="224"/>
        <end position="229"/>
    </location>
</feature>
<feature type="helix" evidence="10">
    <location>
        <begin position="235"/>
        <end position="237"/>
    </location>
</feature>
<feature type="helix" evidence="10">
    <location>
        <begin position="240"/>
        <end position="246"/>
    </location>
</feature>
<feature type="helix" evidence="10">
    <location>
        <begin position="248"/>
        <end position="257"/>
    </location>
</feature>
<feature type="strand" evidence="10">
    <location>
        <begin position="265"/>
        <end position="268"/>
    </location>
</feature>
<feature type="helix" evidence="10">
    <location>
        <begin position="276"/>
        <end position="279"/>
    </location>
</feature>
<feature type="helix" evidence="10">
    <location>
        <begin position="283"/>
        <end position="285"/>
    </location>
</feature>
<feature type="strand" evidence="10">
    <location>
        <begin position="289"/>
        <end position="296"/>
    </location>
</feature>
<feature type="helix" evidence="10">
    <location>
        <begin position="302"/>
        <end position="305"/>
    </location>
</feature>
<feature type="helix" evidence="10">
    <location>
        <begin position="309"/>
        <end position="323"/>
    </location>
</feature>
<feature type="strand" evidence="10">
    <location>
        <begin position="327"/>
        <end position="335"/>
    </location>
</feature>
<feature type="strand" evidence="10">
    <location>
        <begin position="339"/>
        <end position="341"/>
    </location>
</feature>
<feature type="turn" evidence="10">
    <location>
        <begin position="344"/>
        <end position="347"/>
    </location>
</feature>
<feature type="turn" evidence="10">
    <location>
        <begin position="373"/>
        <end position="376"/>
    </location>
</feature>
<feature type="helix" evidence="10">
    <location>
        <begin position="378"/>
        <end position="380"/>
    </location>
</feature>
<feature type="helix" evidence="10">
    <location>
        <begin position="383"/>
        <end position="400"/>
    </location>
</feature>
<feature type="turn" evidence="10">
    <location>
        <begin position="401"/>
        <end position="404"/>
    </location>
</feature>
<feature type="strand" evidence="10">
    <location>
        <begin position="405"/>
        <end position="409"/>
    </location>
</feature>
<feature type="helix" evidence="10">
    <location>
        <begin position="421"/>
        <end position="426"/>
    </location>
</feature>
<feature type="helix" evidence="10">
    <location>
        <begin position="442"/>
        <end position="444"/>
    </location>
</feature>
<comment type="function">
    <text>Glucanases possibly play a role in cell expansion during growth, in cell-cell fusion during mating, and in spore release during sporulation. This enzyme hydrolyzes both 1,3-beta- and 1,6-beta-linkages and even has beta-glucosidase activity. It could also function biosynthetically as a transglycosylase.</text>
</comment>
<comment type="catalytic activity">
    <reaction>
        <text>Successive hydrolysis of beta-D-glucose units from the non-reducing ends of (1-&gt;3)-beta-D-glucans, releasing alpha-glucose.</text>
        <dbReference type="EC" id="3.2.1.58"/>
    </reaction>
</comment>
<comment type="subcellular location">
    <subcellularLocation>
        <location evidence="8">Secreted</location>
        <location evidence="8">Cell wall</location>
    </subcellularLocation>
    <subcellularLocation>
        <location evidence="8">Secreted</location>
    </subcellularLocation>
</comment>
<comment type="miscellaneous">
    <text evidence="3">Present with 4280 molecules/cell in log phase SD medium.</text>
</comment>
<comment type="similarity">
    <text evidence="9">Belongs to the glycosyl hydrolase 5 (cellulase A) family.</text>
</comment>
<name>EXG1_YEAST</name>
<reference key="1">
    <citation type="journal article" date="1991" name="Gene">
        <title>Nucleotide sequence of the exo-1,3-beta-glucanase-encoding gene, EXG1, of the yeast Saccharomyces cerevisiae.</title>
        <authorList>
            <person name="Vazquez de Aldana C.R."/>
            <person name="Correa J."/>
            <person name="San Segundo P."/>
            <person name="Bueno A."/>
            <person name="Nebreda A.R."/>
            <person name="Mendez E."/>
            <person name="del Rey F."/>
        </authorList>
    </citation>
    <scope>NUCLEOTIDE SEQUENCE [GENOMIC DNA]</scope>
    <scope>PROTEIN SEQUENCE OF 41-48</scope>
</reference>
<reference key="2">
    <citation type="journal article" date="1997" name="Nature">
        <title>The nucleotide sequence of Saccharomyces cerevisiae chromosome XII.</title>
        <authorList>
            <person name="Johnston M."/>
            <person name="Hillier L.W."/>
            <person name="Riles L."/>
            <person name="Albermann K."/>
            <person name="Andre B."/>
            <person name="Ansorge W."/>
            <person name="Benes V."/>
            <person name="Brueckner M."/>
            <person name="Delius H."/>
            <person name="Dubois E."/>
            <person name="Duesterhoeft A."/>
            <person name="Entian K.-D."/>
            <person name="Floeth M."/>
            <person name="Goffeau A."/>
            <person name="Hebling U."/>
            <person name="Heumann K."/>
            <person name="Heuss-Neitzel D."/>
            <person name="Hilbert H."/>
            <person name="Hilger F."/>
            <person name="Kleine K."/>
            <person name="Koetter P."/>
            <person name="Louis E.J."/>
            <person name="Messenguy F."/>
            <person name="Mewes H.-W."/>
            <person name="Miosga T."/>
            <person name="Moestl D."/>
            <person name="Mueller-Auer S."/>
            <person name="Nentwich U."/>
            <person name="Obermaier B."/>
            <person name="Piravandi E."/>
            <person name="Pohl T.M."/>
            <person name="Portetelle D."/>
            <person name="Purnelle B."/>
            <person name="Rechmann S."/>
            <person name="Rieger M."/>
            <person name="Rinke M."/>
            <person name="Rose M."/>
            <person name="Scharfe M."/>
            <person name="Scherens B."/>
            <person name="Scholler P."/>
            <person name="Schwager C."/>
            <person name="Schwarz S."/>
            <person name="Underwood A.P."/>
            <person name="Urrestarazu L.A."/>
            <person name="Vandenbol M."/>
            <person name="Verhasselt P."/>
            <person name="Vierendeels F."/>
            <person name="Voet M."/>
            <person name="Volckaert G."/>
            <person name="Voss H."/>
            <person name="Wambutt R."/>
            <person name="Wedler E."/>
            <person name="Wedler H."/>
            <person name="Zimmermann F.K."/>
            <person name="Zollner A."/>
            <person name="Hani J."/>
            <person name="Hoheisel J.D."/>
        </authorList>
    </citation>
    <scope>NUCLEOTIDE SEQUENCE [LARGE SCALE GENOMIC DNA]</scope>
    <source>
        <strain>ATCC 204508 / S288c</strain>
    </source>
</reference>
<reference key="3">
    <citation type="journal article" date="2014" name="G3 (Bethesda)">
        <title>The reference genome sequence of Saccharomyces cerevisiae: Then and now.</title>
        <authorList>
            <person name="Engel S.R."/>
            <person name="Dietrich F.S."/>
            <person name="Fisk D.G."/>
            <person name="Binkley G."/>
            <person name="Balakrishnan R."/>
            <person name="Costanzo M.C."/>
            <person name="Dwight S.S."/>
            <person name="Hitz B.C."/>
            <person name="Karra K."/>
            <person name="Nash R.S."/>
            <person name="Weng S."/>
            <person name="Wong E.D."/>
            <person name="Lloyd P."/>
            <person name="Skrzypek M.S."/>
            <person name="Miyasato S.R."/>
            <person name="Simison M."/>
            <person name="Cherry J.M."/>
        </authorList>
    </citation>
    <scope>GENOME REANNOTATION</scope>
    <source>
        <strain>ATCC 204508 / S288c</strain>
    </source>
</reference>
<reference key="4">
    <citation type="journal article" date="2007" name="Genome Res.">
        <title>Approaching a complete repository of sequence-verified protein-encoding clones for Saccharomyces cerevisiae.</title>
        <authorList>
            <person name="Hu Y."/>
            <person name="Rolfs A."/>
            <person name="Bhullar B."/>
            <person name="Murthy T.V.S."/>
            <person name="Zhu C."/>
            <person name="Berger M.F."/>
            <person name="Camargo A.A."/>
            <person name="Kelley F."/>
            <person name="McCarron S."/>
            <person name="Jepson D."/>
            <person name="Richardson A."/>
            <person name="Raphael J."/>
            <person name="Moreira D."/>
            <person name="Taycher E."/>
            <person name="Zuo D."/>
            <person name="Mohr S."/>
            <person name="Kane M.F."/>
            <person name="Williamson J."/>
            <person name="Simpson A.J.G."/>
            <person name="Bulyk M.L."/>
            <person name="Harlow E."/>
            <person name="Marsischky G."/>
            <person name="Kolodner R.D."/>
            <person name="LaBaer J."/>
        </authorList>
    </citation>
    <scope>NUCLEOTIDE SEQUENCE [GENOMIC DNA]</scope>
    <source>
        <strain>ATCC 204508 / S288c</strain>
    </source>
</reference>
<reference key="5">
    <citation type="journal article" date="1990" name="FEMS Microbiol. Lett.">
        <title>Two glycosylation patterns for a single protein (exoglucanase) in Saccharomyces cerevisiae.</title>
        <authorList>
            <person name="Ramirez M."/>
            <person name="Munoz M.D."/>
            <person name="Basco R.D."/>
            <person name="Gimenez-Gallego G."/>
            <person name="Hernandez L.M."/>
            <person name="Larriba G."/>
        </authorList>
    </citation>
    <scope>PROTEIN SEQUENCE OF 41-86</scope>
</reference>
<reference key="6">
    <citation type="journal article" date="1993" name="Yeast">
        <title>Reduced efficiency in the glycosylation of the first sequon of Saccharomyces cerevisiae exoglucanase leads to the synthesis and secretion of a new glycoform of the molecule.</title>
        <authorList>
            <person name="Basco R.D."/>
            <person name="Munoz M.D."/>
            <person name="Hernandez L.M."/>
            <person name="Vazquez de Aldana C."/>
            <person name="Larriba G."/>
        </authorList>
    </citation>
    <scope>PROTEIN SEQUENCE OF 41-65</scope>
</reference>
<reference key="7">
    <citation type="journal article" date="1998" name="J. Bacteriol.">
        <title>New potential cell wall glucanases of Saccharomyces cerevisiae and their involvement in mating.</title>
        <authorList>
            <person name="Cappellaro C."/>
            <person name="Mrsa V."/>
            <person name="Tanner W."/>
        </authorList>
    </citation>
    <scope>PROTEIN SEQUENCE OF 41-51</scope>
    <scope>SUBCELLULAR LOCATION</scope>
    <source>
        <strain>ATCC 96099 / S288c / SEY6210</strain>
    </source>
</reference>
<reference key="8">
    <citation type="journal article" date="2003" name="Nature">
        <title>Global analysis of protein expression in yeast.</title>
        <authorList>
            <person name="Ghaemmaghami S."/>
            <person name="Huh W.-K."/>
            <person name="Bower K."/>
            <person name="Howson R.W."/>
            <person name="Belle A."/>
            <person name="Dephoure N."/>
            <person name="O'Shea E.K."/>
            <person name="Weissman J.S."/>
        </authorList>
    </citation>
    <scope>LEVEL OF PROTEIN EXPRESSION [LARGE SCALE ANALYSIS]</scope>
</reference>
<reference key="9">
    <citation type="journal article" date="2004" name="Nat. Struct. Mol. Biol.">
        <title>The ER protein folding sensor UDP-glucose glycoprotein-glucosyltransferase modifies substrates distant to local changes in glycoprotein conformation.</title>
        <authorList>
            <person name="Taylor S.C."/>
            <person name="Ferguson A.D."/>
            <person name="Bergeron J.J.M."/>
            <person name="Thomas D.Y."/>
        </authorList>
    </citation>
    <scope>X-RAY CRYSTALLOGRAPHY (1.75 ANGSTROMS) OF 41-448</scope>
    <scope>GLYCOSYLATION AT ASN-165 AND ASN-325</scope>
</reference>
<evidence type="ECO:0000250" key="1"/>
<evidence type="ECO:0000255" key="2"/>
<evidence type="ECO:0000269" key="3">
    <source>
    </source>
</evidence>
<evidence type="ECO:0000269" key="4">
    <source>
    </source>
</evidence>
<evidence type="ECO:0000269" key="5">
    <source>
    </source>
</evidence>
<evidence type="ECO:0000269" key="6">
    <source>
    </source>
</evidence>
<evidence type="ECO:0000269" key="7">
    <source>
    </source>
</evidence>
<evidence type="ECO:0000269" key="8">
    <source>
    </source>
</evidence>
<evidence type="ECO:0000305" key="9"/>
<evidence type="ECO:0007829" key="10">
    <source>
        <dbReference type="PDB" id="1H4P"/>
    </source>
</evidence>
<keyword id="KW-0002">3D-structure</keyword>
<keyword id="KW-0134">Cell wall</keyword>
<keyword id="KW-0961">Cell wall biogenesis/degradation</keyword>
<keyword id="KW-0165">Cleavage on pair of basic residues</keyword>
<keyword id="KW-0903">Direct protein sequencing</keyword>
<keyword id="KW-0325">Glycoprotein</keyword>
<keyword id="KW-0326">Glycosidase</keyword>
<keyword id="KW-0378">Hydrolase</keyword>
<keyword id="KW-1185">Reference proteome</keyword>
<keyword id="KW-0964">Secreted</keyword>
<keyword id="KW-0732">Signal</keyword>
<accession>P23776</accession>
<accession>D6VYU4</accession>
<accession>Q9UR92</accession>
<proteinExistence type="evidence at protein level"/>